<feature type="chain" id="PRO_0000238890" description="Cytochrome c-type biogenesis protein CcmE 2">
    <location>
        <begin position="1"/>
        <end position="156"/>
    </location>
</feature>
<feature type="topological domain" description="Cytoplasmic" evidence="1">
    <location>
        <begin position="1"/>
        <end position="8"/>
    </location>
</feature>
<feature type="transmembrane region" description="Helical; Signal-anchor for type II membrane protein" evidence="1">
    <location>
        <begin position="9"/>
        <end position="29"/>
    </location>
</feature>
<feature type="topological domain" description="Periplasmic" evidence="1">
    <location>
        <begin position="30"/>
        <end position="156"/>
    </location>
</feature>
<feature type="region of interest" description="Disordered" evidence="2">
    <location>
        <begin position="135"/>
        <end position="156"/>
    </location>
</feature>
<feature type="binding site" description="covalent" evidence="1">
    <location>
        <position position="123"/>
    </location>
    <ligand>
        <name>heme</name>
        <dbReference type="ChEBI" id="CHEBI:30413"/>
    </ligand>
</feature>
<feature type="binding site" description="axial binding residue" evidence="1">
    <location>
        <position position="127"/>
    </location>
    <ligand>
        <name>heme</name>
        <dbReference type="ChEBI" id="CHEBI:30413"/>
    </ligand>
    <ligandPart>
        <name>Fe</name>
        <dbReference type="ChEBI" id="CHEBI:18248"/>
    </ligandPart>
</feature>
<reference key="1">
    <citation type="journal article" date="2005" name="Jpn. Agric. Res. Q.">
        <title>Genome sequence of Xanthomonas oryzae pv. oryzae suggests contribution of large numbers of effector genes and insertion sequences to its race diversity.</title>
        <authorList>
            <person name="Ochiai H."/>
            <person name="Inoue Y."/>
            <person name="Takeya M."/>
            <person name="Sasaki A."/>
            <person name="Kaku H."/>
        </authorList>
    </citation>
    <scope>NUCLEOTIDE SEQUENCE [LARGE SCALE GENOMIC DNA]</scope>
    <source>
        <strain>MAFF 311018</strain>
    </source>
</reference>
<proteinExistence type="inferred from homology"/>
<keyword id="KW-0997">Cell inner membrane</keyword>
<keyword id="KW-1003">Cell membrane</keyword>
<keyword id="KW-0201">Cytochrome c-type biogenesis</keyword>
<keyword id="KW-0349">Heme</keyword>
<keyword id="KW-0408">Iron</keyword>
<keyword id="KW-0472">Membrane</keyword>
<keyword id="KW-0479">Metal-binding</keyword>
<keyword id="KW-0735">Signal-anchor</keyword>
<keyword id="KW-0812">Transmembrane</keyword>
<keyword id="KW-1133">Transmembrane helix</keyword>
<accession>Q2P3V2</accession>
<organism>
    <name type="scientific">Xanthomonas oryzae pv. oryzae (strain MAFF 311018)</name>
    <dbReference type="NCBI Taxonomy" id="342109"/>
    <lineage>
        <taxon>Bacteria</taxon>
        <taxon>Pseudomonadati</taxon>
        <taxon>Pseudomonadota</taxon>
        <taxon>Gammaproteobacteria</taxon>
        <taxon>Lysobacterales</taxon>
        <taxon>Lysobacteraceae</taxon>
        <taxon>Xanthomonas</taxon>
    </lineage>
</organism>
<evidence type="ECO:0000255" key="1">
    <source>
        <dbReference type="HAMAP-Rule" id="MF_01959"/>
    </source>
</evidence>
<evidence type="ECO:0000256" key="2">
    <source>
        <dbReference type="SAM" id="MobiDB-lite"/>
    </source>
</evidence>
<gene>
    <name evidence="1" type="primary">ccmE2</name>
    <name evidence="1" type="synonym">cycJ2</name>
    <name type="ordered locus">XOO2020</name>
</gene>
<protein>
    <recommendedName>
        <fullName evidence="1">Cytochrome c-type biogenesis protein CcmE 2</fullName>
    </recommendedName>
    <alternativeName>
        <fullName evidence="1">Cytochrome c maturation protein E 2</fullName>
    </alternativeName>
    <alternativeName>
        <fullName evidence="1">Heme chaperone CcmE 2</fullName>
    </alternativeName>
</protein>
<comment type="function">
    <text evidence="1">Heme chaperone required for the biogenesis of c-type cytochromes. Transiently binds heme delivered by CcmC and transfers the heme to apo-cytochromes in a process facilitated by CcmF and CcmH.</text>
</comment>
<comment type="subcellular location">
    <subcellularLocation>
        <location evidence="1">Cell inner membrane</location>
        <topology evidence="1">Single-pass type II membrane protein</topology>
        <orientation evidence="1">Periplasmic side</orientation>
    </subcellularLocation>
</comment>
<comment type="similarity">
    <text evidence="1">Belongs to the CcmE/CycJ family.</text>
</comment>
<name>CCME2_XANOM</name>
<dbReference type="EMBL" id="AP008229">
    <property type="protein sequence ID" value="BAE68775.1"/>
    <property type="molecule type" value="Genomic_DNA"/>
</dbReference>
<dbReference type="SMR" id="Q2P3V2"/>
<dbReference type="KEGG" id="xom:XOO2020"/>
<dbReference type="HOGENOM" id="CLU_079503_1_1_6"/>
<dbReference type="GO" id="GO:0005886">
    <property type="term" value="C:plasma membrane"/>
    <property type="evidence" value="ECO:0007669"/>
    <property type="project" value="UniProtKB-SubCell"/>
</dbReference>
<dbReference type="GO" id="GO:0020037">
    <property type="term" value="F:heme binding"/>
    <property type="evidence" value="ECO:0007669"/>
    <property type="project" value="InterPro"/>
</dbReference>
<dbReference type="GO" id="GO:0046872">
    <property type="term" value="F:metal ion binding"/>
    <property type="evidence" value="ECO:0007669"/>
    <property type="project" value="UniProtKB-KW"/>
</dbReference>
<dbReference type="GO" id="GO:0017004">
    <property type="term" value="P:cytochrome complex assembly"/>
    <property type="evidence" value="ECO:0007669"/>
    <property type="project" value="UniProtKB-KW"/>
</dbReference>
<dbReference type="FunFam" id="2.40.50.140:FF:000104">
    <property type="entry name" value="Cytochrome c-type biogenesis protein CcmE"/>
    <property type="match status" value="1"/>
</dbReference>
<dbReference type="Gene3D" id="2.40.50.140">
    <property type="entry name" value="Nucleic acid-binding proteins"/>
    <property type="match status" value="1"/>
</dbReference>
<dbReference type="HAMAP" id="MF_01959">
    <property type="entry name" value="CcmE"/>
    <property type="match status" value="1"/>
</dbReference>
<dbReference type="InterPro" id="IPR004329">
    <property type="entry name" value="CcmE"/>
</dbReference>
<dbReference type="InterPro" id="IPR036127">
    <property type="entry name" value="CcmE-like_sf"/>
</dbReference>
<dbReference type="InterPro" id="IPR012340">
    <property type="entry name" value="NA-bd_OB-fold"/>
</dbReference>
<dbReference type="NCBIfam" id="NF009727">
    <property type="entry name" value="PRK13254.1-1"/>
    <property type="match status" value="1"/>
</dbReference>
<dbReference type="NCBIfam" id="NF009728">
    <property type="entry name" value="PRK13254.1-2"/>
    <property type="match status" value="1"/>
</dbReference>
<dbReference type="NCBIfam" id="NF009729">
    <property type="entry name" value="PRK13254.1-3"/>
    <property type="match status" value="1"/>
</dbReference>
<dbReference type="NCBIfam" id="NF009731">
    <property type="entry name" value="PRK13254.1-5"/>
    <property type="match status" value="1"/>
</dbReference>
<dbReference type="PANTHER" id="PTHR34128">
    <property type="entry name" value="CYTOCHROME C-TYPE BIOGENESIS PROTEIN CCME HOMOLOG, MITOCHONDRIAL"/>
    <property type="match status" value="1"/>
</dbReference>
<dbReference type="PANTHER" id="PTHR34128:SF2">
    <property type="entry name" value="CYTOCHROME C-TYPE BIOGENESIS PROTEIN CCME HOMOLOG, MITOCHONDRIAL"/>
    <property type="match status" value="1"/>
</dbReference>
<dbReference type="Pfam" id="PF03100">
    <property type="entry name" value="CcmE"/>
    <property type="match status" value="1"/>
</dbReference>
<dbReference type="SUPFAM" id="SSF82093">
    <property type="entry name" value="Heme chaperone CcmE"/>
    <property type="match status" value="1"/>
</dbReference>
<sequence length="156" mass="17109">MNPQRRRRLWWVLALLLAGGLATTLVSMALQRNVAYLYTPSEVLRGDAGENSRFRLGGMVEKGSFQRASGALEAHFRVTDGDAQLPVSYDRILPDLFREGQAVVATGRMQSGVFVAEDVLAKHDETYMPKEVADKMGSAHRKHDVPAAANQGGALR</sequence>